<evidence type="ECO:0000255" key="1"/>
<evidence type="ECO:0000305" key="2"/>
<name>TMC5B_MOUSE</name>
<feature type="chain" id="PRO_0000305156" description="Transmembrane and coiled-coil domain-containing protein 5B">
    <location>
        <begin position="1"/>
        <end position="307"/>
    </location>
</feature>
<feature type="transmembrane region" description="Helical" evidence="1">
    <location>
        <begin position="246"/>
        <end position="268"/>
    </location>
</feature>
<feature type="coiled-coil region" evidence="1">
    <location>
        <begin position="20"/>
        <end position="212"/>
    </location>
</feature>
<feature type="sequence conflict" description="In Ref. 1; BAB30151." evidence="2" ref="1">
    <original>L</original>
    <variation>P</variation>
    <location>
        <position position="101"/>
    </location>
</feature>
<accession>Q80X59</accession>
<accession>Q9D4S7</accession>
<proteinExistence type="evidence at transcript level"/>
<protein>
    <recommendedName>
        <fullName>Transmembrane and coiled-coil domain-containing protein 5B</fullName>
    </recommendedName>
</protein>
<reference key="1">
    <citation type="journal article" date="2005" name="Science">
        <title>The transcriptional landscape of the mammalian genome.</title>
        <authorList>
            <person name="Carninci P."/>
            <person name="Kasukawa T."/>
            <person name="Katayama S."/>
            <person name="Gough J."/>
            <person name="Frith M.C."/>
            <person name="Maeda N."/>
            <person name="Oyama R."/>
            <person name="Ravasi T."/>
            <person name="Lenhard B."/>
            <person name="Wells C."/>
            <person name="Kodzius R."/>
            <person name="Shimokawa K."/>
            <person name="Bajic V.B."/>
            <person name="Brenner S.E."/>
            <person name="Batalov S."/>
            <person name="Forrest A.R."/>
            <person name="Zavolan M."/>
            <person name="Davis M.J."/>
            <person name="Wilming L.G."/>
            <person name="Aidinis V."/>
            <person name="Allen J.E."/>
            <person name="Ambesi-Impiombato A."/>
            <person name="Apweiler R."/>
            <person name="Aturaliya R.N."/>
            <person name="Bailey T.L."/>
            <person name="Bansal M."/>
            <person name="Baxter L."/>
            <person name="Beisel K.W."/>
            <person name="Bersano T."/>
            <person name="Bono H."/>
            <person name="Chalk A.M."/>
            <person name="Chiu K.P."/>
            <person name="Choudhary V."/>
            <person name="Christoffels A."/>
            <person name="Clutterbuck D.R."/>
            <person name="Crowe M.L."/>
            <person name="Dalla E."/>
            <person name="Dalrymple B.P."/>
            <person name="de Bono B."/>
            <person name="Della Gatta G."/>
            <person name="di Bernardo D."/>
            <person name="Down T."/>
            <person name="Engstrom P."/>
            <person name="Fagiolini M."/>
            <person name="Faulkner G."/>
            <person name="Fletcher C.F."/>
            <person name="Fukushima T."/>
            <person name="Furuno M."/>
            <person name="Futaki S."/>
            <person name="Gariboldi M."/>
            <person name="Georgii-Hemming P."/>
            <person name="Gingeras T.R."/>
            <person name="Gojobori T."/>
            <person name="Green R.E."/>
            <person name="Gustincich S."/>
            <person name="Harbers M."/>
            <person name="Hayashi Y."/>
            <person name="Hensch T.K."/>
            <person name="Hirokawa N."/>
            <person name="Hill D."/>
            <person name="Huminiecki L."/>
            <person name="Iacono M."/>
            <person name="Ikeo K."/>
            <person name="Iwama A."/>
            <person name="Ishikawa T."/>
            <person name="Jakt M."/>
            <person name="Kanapin A."/>
            <person name="Katoh M."/>
            <person name="Kawasawa Y."/>
            <person name="Kelso J."/>
            <person name="Kitamura H."/>
            <person name="Kitano H."/>
            <person name="Kollias G."/>
            <person name="Krishnan S.P."/>
            <person name="Kruger A."/>
            <person name="Kummerfeld S.K."/>
            <person name="Kurochkin I.V."/>
            <person name="Lareau L.F."/>
            <person name="Lazarevic D."/>
            <person name="Lipovich L."/>
            <person name="Liu J."/>
            <person name="Liuni S."/>
            <person name="McWilliam S."/>
            <person name="Madan Babu M."/>
            <person name="Madera M."/>
            <person name="Marchionni L."/>
            <person name="Matsuda H."/>
            <person name="Matsuzawa S."/>
            <person name="Miki H."/>
            <person name="Mignone F."/>
            <person name="Miyake S."/>
            <person name="Morris K."/>
            <person name="Mottagui-Tabar S."/>
            <person name="Mulder N."/>
            <person name="Nakano N."/>
            <person name="Nakauchi H."/>
            <person name="Ng P."/>
            <person name="Nilsson R."/>
            <person name="Nishiguchi S."/>
            <person name="Nishikawa S."/>
            <person name="Nori F."/>
            <person name="Ohara O."/>
            <person name="Okazaki Y."/>
            <person name="Orlando V."/>
            <person name="Pang K.C."/>
            <person name="Pavan W.J."/>
            <person name="Pavesi G."/>
            <person name="Pesole G."/>
            <person name="Petrovsky N."/>
            <person name="Piazza S."/>
            <person name="Reed J."/>
            <person name="Reid J.F."/>
            <person name="Ring B.Z."/>
            <person name="Ringwald M."/>
            <person name="Rost B."/>
            <person name="Ruan Y."/>
            <person name="Salzberg S.L."/>
            <person name="Sandelin A."/>
            <person name="Schneider C."/>
            <person name="Schoenbach C."/>
            <person name="Sekiguchi K."/>
            <person name="Semple C.A."/>
            <person name="Seno S."/>
            <person name="Sessa L."/>
            <person name="Sheng Y."/>
            <person name="Shibata Y."/>
            <person name="Shimada H."/>
            <person name="Shimada K."/>
            <person name="Silva D."/>
            <person name="Sinclair B."/>
            <person name="Sperling S."/>
            <person name="Stupka E."/>
            <person name="Sugiura K."/>
            <person name="Sultana R."/>
            <person name="Takenaka Y."/>
            <person name="Taki K."/>
            <person name="Tammoja K."/>
            <person name="Tan S.L."/>
            <person name="Tang S."/>
            <person name="Taylor M.S."/>
            <person name="Tegner J."/>
            <person name="Teichmann S.A."/>
            <person name="Ueda H.R."/>
            <person name="van Nimwegen E."/>
            <person name="Verardo R."/>
            <person name="Wei C.L."/>
            <person name="Yagi K."/>
            <person name="Yamanishi H."/>
            <person name="Zabarovsky E."/>
            <person name="Zhu S."/>
            <person name="Zimmer A."/>
            <person name="Hide W."/>
            <person name="Bult C."/>
            <person name="Grimmond S.M."/>
            <person name="Teasdale R.D."/>
            <person name="Liu E.T."/>
            <person name="Brusic V."/>
            <person name="Quackenbush J."/>
            <person name="Wahlestedt C."/>
            <person name="Mattick J.S."/>
            <person name="Hume D.A."/>
            <person name="Kai C."/>
            <person name="Sasaki D."/>
            <person name="Tomaru Y."/>
            <person name="Fukuda S."/>
            <person name="Kanamori-Katayama M."/>
            <person name="Suzuki M."/>
            <person name="Aoki J."/>
            <person name="Arakawa T."/>
            <person name="Iida J."/>
            <person name="Imamura K."/>
            <person name="Itoh M."/>
            <person name="Kato T."/>
            <person name="Kawaji H."/>
            <person name="Kawagashira N."/>
            <person name="Kawashima T."/>
            <person name="Kojima M."/>
            <person name="Kondo S."/>
            <person name="Konno H."/>
            <person name="Nakano K."/>
            <person name="Ninomiya N."/>
            <person name="Nishio T."/>
            <person name="Okada M."/>
            <person name="Plessy C."/>
            <person name="Shibata K."/>
            <person name="Shiraki T."/>
            <person name="Suzuki S."/>
            <person name="Tagami M."/>
            <person name="Waki K."/>
            <person name="Watahiki A."/>
            <person name="Okamura-Oho Y."/>
            <person name="Suzuki H."/>
            <person name="Kawai J."/>
            <person name="Hayashizaki Y."/>
        </authorList>
    </citation>
    <scope>NUCLEOTIDE SEQUENCE [LARGE SCALE MRNA]</scope>
    <source>
        <strain>C57BL/6J</strain>
        <tissue>Testis</tissue>
    </source>
</reference>
<reference key="2">
    <citation type="journal article" date="2009" name="PLoS Biol.">
        <title>Lineage-specific biology revealed by a finished genome assembly of the mouse.</title>
        <authorList>
            <person name="Church D.M."/>
            <person name="Goodstadt L."/>
            <person name="Hillier L.W."/>
            <person name="Zody M.C."/>
            <person name="Goldstein S."/>
            <person name="She X."/>
            <person name="Bult C.J."/>
            <person name="Agarwala R."/>
            <person name="Cherry J.L."/>
            <person name="DiCuccio M."/>
            <person name="Hlavina W."/>
            <person name="Kapustin Y."/>
            <person name="Meric P."/>
            <person name="Maglott D."/>
            <person name="Birtle Z."/>
            <person name="Marques A.C."/>
            <person name="Graves T."/>
            <person name="Zhou S."/>
            <person name="Teague B."/>
            <person name="Potamousis K."/>
            <person name="Churas C."/>
            <person name="Place M."/>
            <person name="Herschleb J."/>
            <person name="Runnheim R."/>
            <person name="Forrest D."/>
            <person name="Amos-Landgraf J."/>
            <person name="Schwartz D.C."/>
            <person name="Cheng Z."/>
            <person name="Lindblad-Toh K."/>
            <person name="Eichler E.E."/>
            <person name="Ponting C.P."/>
        </authorList>
    </citation>
    <scope>NUCLEOTIDE SEQUENCE [LARGE SCALE GENOMIC DNA]</scope>
    <source>
        <strain>C57BL/6J</strain>
    </source>
</reference>
<reference key="3">
    <citation type="journal article" date="2004" name="Genome Res.">
        <title>The status, quality, and expansion of the NIH full-length cDNA project: the Mammalian Gene Collection (MGC).</title>
        <authorList>
            <consortium name="The MGC Project Team"/>
        </authorList>
    </citation>
    <scope>NUCLEOTIDE SEQUENCE [LARGE SCALE MRNA]</scope>
    <source>
        <tissue>Testis</tissue>
    </source>
</reference>
<keyword id="KW-0175">Coiled coil</keyword>
<keyword id="KW-0472">Membrane</keyword>
<keyword id="KW-1185">Reference proteome</keyword>
<keyword id="KW-0812">Transmembrane</keyword>
<keyword id="KW-1133">Transmembrane helix</keyword>
<organism>
    <name type="scientific">Mus musculus</name>
    <name type="common">Mouse</name>
    <dbReference type="NCBI Taxonomy" id="10090"/>
    <lineage>
        <taxon>Eukaryota</taxon>
        <taxon>Metazoa</taxon>
        <taxon>Chordata</taxon>
        <taxon>Craniata</taxon>
        <taxon>Vertebrata</taxon>
        <taxon>Euteleostomi</taxon>
        <taxon>Mammalia</taxon>
        <taxon>Eutheria</taxon>
        <taxon>Euarchontoglires</taxon>
        <taxon>Glires</taxon>
        <taxon>Rodentia</taxon>
        <taxon>Myomorpha</taxon>
        <taxon>Muroidea</taxon>
        <taxon>Muridae</taxon>
        <taxon>Murinae</taxon>
        <taxon>Mus</taxon>
        <taxon>Mus</taxon>
    </lineage>
</organism>
<dbReference type="EMBL" id="AK016214">
    <property type="protein sequence ID" value="BAB30151.1"/>
    <property type="molecule type" value="mRNA"/>
</dbReference>
<dbReference type="EMBL" id="AL929450">
    <property type="status" value="NOT_ANNOTATED_CDS"/>
    <property type="molecule type" value="Genomic_DNA"/>
</dbReference>
<dbReference type="EMBL" id="BC050803">
    <property type="protein sequence ID" value="AAH50803.1"/>
    <property type="molecule type" value="mRNA"/>
</dbReference>
<dbReference type="CCDS" id="CCDS16558.1"/>
<dbReference type="RefSeq" id="NP_083508.1">
    <property type="nucleotide sequence ID" value="NM_029232.2"/>
</dbReference>
<dbReference type="SMR" id="Q80X59"/>
<dbReference type="STRING" id="10090.ENSMUSP00000042247"/>
<dbReference type="GlyGen" id="Q80X59">
    <property type="glycosylation" value="1 site, 1 O-linked glycan (1 site)"/>
</dbReference>
<dbReference type="iPTMnet" id="Q80X59"/>
<dbReference type="PaxDb" id="10090-ENSMUSP00000042247"/>
<dbReference type="ProteomicsDB" id="259123"/>
<dbReference type="DNASU" id="75275"/>
<dbReference type="Ensembl" id="ENSMUST00000040856.3">
    <property type="protein sequence ID" value="ENSMUSP00000042247.3"/>
    <property type="gene ID" value="ENSMUSG00000041255.3"/>
</dbReference>
<dbReference type="GeneID" id="75275"/>
<dbReference type="KEGG" id="mmu:75275"/>
<dbReference type="UCSC" id="uc008lpj.1">
    <property type="organism name" value="mouse"/>
</dbReference>
<dbReference type="AGR" id="MGI:1922525"/>
<dbReference type="CTD" id="100652857"/>
<dbReference type="MGI" id="MGI:1922525">
    <property type="gene designation" value="Tmco5b"/>
</dbReference>
<dbReference type="VEuPathDB" id="HostDB:ENSMUSG00000041255"/>
<dbReference type="eggNOG" id="ENOG502SXU7">
    <property type="taxonomic scope" value="Eukaryota"/>
</dbReference>
<dbReference type="GeneTree" id="ENSGT00940000153380"/>
<dbReference type="HOGENOM" id="CLU_061400_0_0_1"/>
<dbReference type="InParanoid" id="Q80X59"/>
<dbReference type="OMA" id="FRCLVFM"/>
<dbReference type="OrthoDB" id="9450739at2759"/>
<dbReference type="PhylomeDB" id="Q80X59"/>
<dbReference type="TreeFam" id="TF337140"/>
<dbReference type="BioGRID-ORCS" id="75275">
    <property type="hits" value="0 hits in 77 CRISPR screens"/>
</dbReference>
<dbReference type="ChiTaRS" id="Tmco5b">
    <property type="organism name" value="mouse"/>
</dbReference>
<dbReference type="PRO" id="PR:Q80X59"/>
<dbReference type="Proteomes" id="UP000000589">
    <property type="component" value="Chromosome 2"/>
</dbReference>
<dbReference type="RNAct" id="Q80X59">
    <property type="molecule type" value="protein"/>
</dbReference>
<dbReference type="Bgee" id="ENSMUSG00000041255">
    <property type="expression patterns" value="Expressed in spermatid and 6 other cell types or tissues"/>
</dbReference>
<dbReference type="GO" id="GO:0016020">
    <property type="term" value="C:membrane"/>
    <property type="evidence" value="ECO:0007669"/>
    <property type="project" value="UniProtKB-SubCell"/>
</dbReference>
<dbReference type="InterPro" id="IPR026617">
    <property type="entry name" value="SMCO2/5"/>
</dbReference>
<dbReference type="PANTHER" id="PTHR22422:SF1">
    <property type="entry name" value="TRANSMEMBRANE AND COILED-COIL DOMAIN-CONTAINING PROTEIN 5B"/>
    <property type="match status" value="1"/>
</dbReference>
<dbReference type="PANTHER" id="PTHR22422">
    <property type="entry name" value="TRANSMEMBRANE AND COILED-COIL DOMAIN-CONTAINING PROTEIN 5B-RELATED"/>
    <property type="match status" value="1"/>
</dbReference>
<dbReference type="Pfam" id="PF14992">
    <property type="entry name" value="TMCO5"/>
    <property type="match status" value="1"/>
</dbReference>
<comment type="subcellular location">
    <subcellularLocation>
        <location evidence="2">Membrane</location>
        <topology evidence="2">Single-pass membrane protein</topology>
    </subcellularLocation>
</comment>
<comment type="similarity">
    <text evidence="2">Belongs to the TMCO5 family.</text>
</comment>
<sequence length="307" mass="36059">MEDAGQNPLDDEAEITEIPTLEAIKQNLKYLNSDLEKDLQRLDEANQILLRKIQKKEESIQSLERDIALSIGRVPERDDFNEILAQKETALKDLELESAKLEKKNKTLSKNVMELQKKISKGLKNIASDPETLKKKVTEFKVKLQKSTESCAQQEKEIAKMESDYQSVFQLCEDQAHYIKKYQEILREMEKEKEVMLLEKEISKAQNDSSQVVKPGSTLVETIQSNMEKNIIKKQKRKFWLRHFRYLFFMVMIVIRLLGYVFFHLQYVNPDFLVDTLPMLMSRSSLKWLRDILFPFLTLEVEDVLPH</sequence>
<gene>
    <name type="primary">Tmco5b</name>
</gene>